<feature type="chain" id="PRO_0000232734" description="Ribosomal protein S6 kinase alpha-5">
    <location>
        <begin position="1"/>
        <end position="789"/>
    </location>
</feature>
<feature type="domain" description="Protein kinase 1" evidence="2">
    <location>
        <begin position="39"/>
        <end position="308"/>
    </location>
</feature>
<feature type="domain" description="AGC-kinase C-terminal" evidence="3">
    <location>
        <begin position="309"/>
        <end position="377"/>
    </location>
</feature>
<feature type="domain" description="Protein kinase 2" evidence="2">
    <location>
        <begin position="416"/>
        <end position="677"/>
    </location>
</feature>
<feature type="region of interest" description="Disordered" evidence="4">
    <location>
        <begin position="731"/>
        <end position="789"/>
    </location>
</feature>
<feature type="compositionally biased region" description="Low complexity" evidence="4">
    <location>
        <begin position="739"/>
        <end position="769"/>
    </location>
</feature>
<feature type="compositionally biased region" description="Polar residues" evidence="4">
    <location>
        <begin position="770"/>
        <end position="789"/>
    </location>
</feature>
<feature type="active site" description="Proton acceptor" evidence="1">
    <location>
        <position position="167"/>
    </location>
</feature>
<feature type="active site" description="Proton acceptor" evidence="1">
    <location>
        <position position="534"/>
    </location>
</feature>
<feature type="binding site" evidence="2">
    <location>
        <begin position="45"/>
        <end position="53"/>
    </location>
    <ligand>
        <name>ATP</name>
        <dbReference type="ChEBI" id="CHEBI:30616"/>
    </ligand>
</feature>
<feature type="binding site" evidence="2">
    <location>
        <position position="71"/>
    </location>
    <ligand>
        <name>ATP</name>
        <dbReference type="ChEBI" id="CHEBI:30616"/>
    </ligand>
</feature>
<feature type="binding site" evidence="2">
    <location>
        <begin position="422"/>
        <end position="430"/>
    </location>
    <ligand>
        <name>ATP</name>
        <dbReference type="ChEBI" id="CHEBI:30616"/>
    </ligand>
</feature>
<feature type="binding site" evidence="2">
    <location>
        <position position="445"/>
    </location>
    <ligand>
        <name>ATP</name>
        <dbReference type="ChEBI" id="CHEBI:30616"/>
    </ligand>
</feature>
<feature type="modified residue" description="Phosphoserine; by autocatalysis" evidence="1">
    <location>
        <position position="202"/>
    </location>
</feature>
<feature type="modified residue" description="Phosphoserine" evidence="1">
    <location>
        <position position="350"/>
    </location>
</feature>
<feature type="modified residue" description="Phosphoserine; by autocatalysis" evidence="1">
    <location>
        <position position="366"/>
    </location>
</feature>
<feature type="modified residue" description="Phosphoserine; by autocatalysis" evidence="1">
    <location>
        <position position="371"/>
    </location>
</feature>
<feature type="modified residue" description="Phosphothreonine" evidence="1">
    <location>
        <position position="571"/>
    </location>
</feature>
<feature type="modified residue" description="Phosphothreonine" evidence="1">
    <location>
        <position position="690"/>
    </location>
</feature>
<feature type="modified residue" description="Phosphoserine; by autocatalysis" evidence="1">
    <location>
        <position position="740"/>
    </location>
</feature>
<feature type="modified residue" description="Phosphoserine; by autocatalysis" evidence="1">
    <location>
        <position position="742"/>
    </location>
</feature>
<feature type="modified residue" description="Phosphoserine; by autocatalysis" evidence="1">
    <location>
        <position position="748"/>
    </location>
</feature>
<organism>
    <name type="scientific">Gallus gallus</name>
    <name type="common">Chicken</name>
    <dbReference type="NCBI Taxonomy" id="9031"/>
    <lineage>
        <taxon>Eukaryota</taxon>
        <taxon>Metazoa</taxon>
        <taxon>Chordata</taxon>
        <taxon>Craniata</taxon>
        <taxon>Vertebrata</taxon>
        <taxon>Euteleostomi</taxon>
        <taxon>Archelosauria</taxon>
        <taxon>Archosauria</taxon>
        <taxon>Dinosauria</taxon>
        <taxon>Saurischia</taxon>
        <taxon>Theropoda</taxon>
        <taxon>Coelurosauria</taxon>
        <taxon>Aves</taxon>
        <taxon>Neognathae</taxon>
        <taxon>Galloanserae</taxon>
        <taxon>Galliformes</taxon>
        <taxon>Phasianidae</taxon>
        <taxon>Phasianinae</taxon>
        <taxon>Gallus</taxon>
    </lineage>
</organism>
<reference key="1">
    <citation type="journal article" date="2005" name="Genome Biol.">
        <title>Full-length cDNAs from chicken bursal lymphocytes to facilitate gene function analysis.</title>
        <authorList>
            <person name="Caldwell R.B."/>
            <person name="Kierzek A.M."/>
            <person name="Arakawa H."/>
            <person name="Bezzubov Y."/>
            <person name="Zaim J."/>
            <person name="Fiedler P."/>
            <person name="Kutter S."/>
            <person name="Blagodatski A."/>
            <person name="Kostovska D."/>
            <person name="Koter M."/>
            <person name="Plachy J."/>
            <person name="Carninci P."/>
            <person name="Hayashizaki Y."/>
            <person name="Buerstedde J.-M."/>
        </authorList>
    </citation>
    <scope>NUCLEOTIDE SEQUENCE [LARGE SCALE MRNA]</scope>
    <source>
        <strain>CB</strain>
        <tissue>Bursa of Fabricius</tissue>
    </source>
</reference>
<accession>Q5F3L1</accession>
<sequence length="789" mass="89040">MEGPSGSAQGSEWPLLTVTHELRNANLTGHAEKVGIENFELLKVLGTGAYGKVFLVRKVSGHDAGKLYAMKVLKKATIVQKAKTTEHTRTERQVLEHIRQSPFLVTLHYAFQTDTKLHLILDYINGGELFTHLSQRERFSENEVQIYIGEIVLALEHLHKLGIIYRDIKLENILLDSDGHVVLTDFGLSKEFLTDENERAYSFCGTIEYMAPDIVRGGDTGHDKAVDWWSVGVLMYELLTGASPFTVDGEKNSQAEISRRILKSEPPYPQEMSALSKDIIQRLLMKDPKKRLGCGPTDADEIKQHPFFQNINWDDLAAKKVPAPFKPVIRDELDVSNFAEEFTEMDPTYSPAATPQTSEKIFQGYSFVAPSILFKRNAATVDPVQFYVGDERPGTTTIARSAMMKDSPFFQHYELDLKEKPLGEGSFSICRKCLHKKTSQEYAVKIISKRMEANTQREITALKLCEGHPNVVKLHEVYHDQLHTFLVMELLKGGELLERIQKKQHFSETEASHIMRRLVSAVSHMHDVGVVHRDLKPENLLFTDETDNSEIKIIDFGFARLKPPDNQPLKTPCFTLHYAAPELFNHNGYDESCDLWSLGVILYTMLSGQVPFQSQDKSLTCTSALEIMKKIKKGEFSFEGEAWKNVSEEAKELIQGLLTVDPNKRIKMSSLRYNEWLQDGSQLSSNPLMTPDNLGSSGAAVHTYVKATFHAFNKYKREGFCLQNVDKAPLAKRRKMKKTSTSTETRSSSSESSHSSSSHSHGKTTPTKTLQPTNPTDSNNPETIFQFSD</sequence>
<keyword id="KW-0067">ATP-binding</keyword>
<keyword id="KW-0418">Kinase</keyword>
<keyword id="KW-0460">Magnesium</keyword>
<keyword id="KW-0479">Metal-binding</keyword>
<keyword id="KW-0547">Nucleotide-binding</keyword>
<keyword id="KW-0539">Nucleus</keyword>
<keyword id="KW-0597">Phosphoprotein</keyword>
<keyword id="KW-1185">Reference proteome</keyword>
<keyword id="KW-0677">Repeat</keyword>
<keyword id="KW-0723">Serine/threonine-protein kinase</keyword>
<keyword id="KW-0808">Transferase</keyword>
<protein>
    <recommendedName>
        <fullName>Ribosomal protein S6 kinase alpha-5</fullName>
        <shortName>S6K-alpha-5</shortName>
        <ecNumber>2.7.11.1</ecNumber>
    </recommendedName>
</protein>
<name>KS6A5_CHICK</name>
<dbReference type="EC" id="2.7.11.1"/>
<dbReference type="EMBL" id="AJ851639">
    <property type="protein sequence ID" value="CAH65273.1"/>
    <property type="molecule type" value="mRNA"/>
</dbReference>
<dbReference type="RefSeq" id="NP_001012605.1">
    <property type="nucleotide sequence ID" value="NM_001012587.3"/>
</dbReference>
<dbReference type="SMR" id="Q5F3L1"/>
<dbReference type="FunCoup" id="Q5F3L1">
    <property type="interactions" value="834"/>
</dbReference>
<dbReference type="STRING" id="9031.ENSGALP00000057790"/>
<dbReference type="GlyGen" id="Q5F3L1">
    <property type="glycosylation" value="1 site"/>
</dbReference>
<dbReference type="PaxDb" id="9031-ENSGALP00000017378"/>
<dbReference type="Ensembl" id="ENSGALT00010042798.1">
    <property type="protein sequence ID" value="ENSGALP00010025288.1"/>
    <property type="gene ID" value="ENSGALG00010017703.1"/>
</dbReference>
<dbReference type="GeneID" id="423408"/>
<dbReference type="KEGG" id="gga:423408"/>
<dbReference type="CTD" id="9252"/>
<dbReference type="VEuPathDB" id="HostDB:geneid_423408"/>
<dbReference type="eggNOG" id="KOG0603">
    <property type="taxonomic scope" value="Eukaryota"/>
</dbReference>
<dbReference type="GeneTree" id="ENSGT00940000156886"/>
<dbReference type="InParanoid" id="Q5F3L1"/>
<dbReference type="OMA" id="VEMIYAF"/>
<dbReference type="OrthoDB" id="6764942at2759"/>
<dbReference type="PhylomeDB" id="Q5F3L1"/>
<dbReference type="TreeFam" id="TF313438"/>
<dbReference type="Reactome" id="R-GGA-198753">
    <property type="pathway name" value="ERK/MAPK targets"/>
</dbReference>
<dbReference type="Reactome" id="R-GGA-199920">
    <property type="pathway name" value="CREB phosphorylation"/>
</dbReference>
<dbReference type="Reactome" id="R-GGA-375165">
    <property type="pathway name" value="NCAM signaling for neurite out-growth"/>
</dbReference>
<dbReference type="Reactome" id="R-GGA-5621575">
    <property type="pathway name" value="CD209 (DC-SIGN) signaling"/>
</dbReference>
<dbReference type="PRO" id="PR:Q5F3L1"/>
<dbReference type="Proteomes" id="UP000000539">
    <property type="component" value="Chromosome 5"/>
</dbReference>
<dbReference type="Bgee" id="ENSGALG00000030580">
    <property type="expression patterns" value="Expressed in spleen and 13 other cell types or tissues"/>
</dbReference>
<dbReference type="GO" id="GO:0005737">
    <property type="term" value="C:cytoplasm"/>
    <property type="evidence" value="ECO:0000318"/>
    <property type="project" value="GO_Central"/>
</dbReference>
<dbReference type="GO" id="GO:0005654">
    <property type="term" value="C:nucleoplasm"/>
    <property type="evidence" value="ECO:0000318"/>
    <property type="project" value="GO_Central"/>
</dbReference>
<dbReference type="GO" id="GO:0005524">
    <property type="term" value="F:ATP binding"/>
    <property type="evidence" value="ECO:0007669"/>
    <property type="project" value="UniProtKB-KW"/>
</dbReference>
<dbReference type="GO" id="GO:0044024">
    <property type="term" value="F:histone H2AS1 kinase activity"/>
    <property type="evidence" value="ECO:0007669"/>
    <property type="project" value="Ensembl"/>
</dbReference>
<dbReference type="GO" id="GO:0035175">
    <property type="term" value="F:histone H3S10 kinase activity"/>
    <property type="evidence" value="ECO:0007669"/>
    <property type="project" value="Ensembl"/>
</dbReference>
<dbReference type="GO" id="GO:0044022">
    <property type="term" value="F:histone H3S28 kinase activity"/>
    <property type="evidence" value="ECO:0007669"/>
    <property type="project" value="Ensembl"/>
</dbReference>
<dbReference type="GO" id="GO:0000287">
    <property type="term" value="F:magnesium ion binding"/>
    <property type="evidence" value="ECO:0007669"/>
    <property type="project" value="InterPro"/>
</dbReference>
<dbReference type="GO" id="GO:0106310">
    <property type="term" value="F:protein serine kinase activity"/>
    <property type="evidence" value="ECO:0007669"/>
    <property type="project" value="RHEA"/>
</dbReference>
<dbReference type="GO" id="GO:0004674">
    <property type="term" value="F:protein serine/threonine kinase activity"/>
    <property type="evidence" value="ECO:0000318"/>
    <property type="project" value="GO_Central"/>
</dbReference>
<dbReference type="GO" id="GO:0004713">
    <property type="term" value="F:protein tyrosine kinase activity"/>
    <property type="evidence" value="ECO:0007669"/>
    <property type="project" value="Ensembl"/>
</dbReference>
<dbReference type="GO" id="GO:0070498">
    <property type="term" value="P:interleukin-1-mediated signaling pathway"/>
    <property type="evidence" value="ECO:0007669"/>
    <property type="project" value="Ensembl"/>
</dbReference>
<dbReference type="GO" id="GO:0045892">
    <property type="term" value="P:negative regulation of DNA-templated transcription"/>
    <property type="evidence" value="ECO:0007669"/>
    <property type="project" value="Ensembl"/>
</dbReference>
<dbReference type="GO" id="GO:0045944">
    <property type="term" value="P:positive regulation of transcription by RNA polymerase II"/>
    <property type="evidence" value="ECO:0007669"/>
    <property type="project" value="Ensembl"/>
</dbReference>
<dbReference type="GO" id="GO:0043687">
    <property type="term" value="P:post-translational protein modification"/>
    <property type="evidence" value="ECO:0007669"/>
    <property type="project" value="Ensembl"/>
</dbReference>
<dbReference type="GO" id="GO:0006355">
    <property type="term" value="P:regulation of DNA-templated transcription"/>
    <property type="evidence" value="ECO:0000318"/>
    <property type="project" value="GO_Central"/>
</dbReference>
<dbReference type="GO" id="GO:0099175">
    <property type="term" value="P:regulation of postsynapse organization"/>
    <property type="evidence" value="ECO:0007669"/>
    <property type="project" value="Ensembl"/>
</dbReference>
<dbReference type="GO" id="GO:0038202">
    <property type="term" value="P:TORC1 signaling"/>
    <property type="evidence" value="ECO:0000318"/>
    <property type="project" value="GO_Central"/>
</dbReference>
<dbReference type="CDD" id="cd14179">
    <property type="entry name" value="STKc_MSK1_C"/>
    <property type="match status" value="1"/>
</dbReference>
<dbReference type="CDD" id="cd05613">
    <property type="entry name" value="STKc_MSK1_N"/>
    <property type="match status" value="1"/>
</dbReference>
<dbReference type="FunFam" id="3.30.200.20:FF:000648">
    <property type="entry name" value="Non-specific serine/threonine protein kinase"/>
    <property type="match status" value="1"/>
</dbReference>
<dbReference type="FunFam" id="1.10.510.10:FF:000109">
    <property type="entry name" value="Ribosomal protein S6 kinase"/>
    <property type="match status" value="1"/>
</dbReference>
<dbReference type="FunFam" id="1.10.510.10:FF:000157">
    <property type="entry name" value="Ribosomal protein S6 kinase"/>
    <property type="match status" value="1"/>
</dbReference>
<dbReference type="FunFam" id="3.30.200.20:FF:000208">
    <property type="entry name" value="Ribosomal protein S6 kinase"/>
    <property type="match status" value="1"/>
</dbReference>
<dbReference type="FunFam" id="3.30.200.20:FF:000686">
    <property type="entry name" value="Ribosomal protein S6 kinase"/>
    <property type="match status" value="1"/>
</dbReference>
<dbReference type="Gene3D" id="3.30.200.20">
    <property type="entry name" value="Phosphorylase Kinase, domain 1"/>
    <property type="match status" value="2"/>
</dbReference>
<dbReference type="Gene3D" id="1.10.510.10">
    <property type="entry name" value="Transferase(Phosphotransferase) domain 1"/>
    <property type="match status" value="2"/>
</dbReference>
<dbReference type="InterPro" id="IPR000961">
    <property type="entry name" value="AGC-kinase_C"/>
</dbReference>
<dbReference type="InterPro" id="IPR011009">
    <property type="entry name" value="Kinase-like_dom_sf"/>
</dbReference>
<dbReference type="InterPro" id="IPR017892">
    <property type="entry name" value="Pkinase_C"/>
</dbReference>
<dbReference type="InterPro" id="IPR000719">
    <property type="entry name" value="Prot_kinase_dom"/>
</dbReference>
<dbReference type="InterPro" id="IPR017441">
    <property type="entry name" value="Protein_kinase_ATP_BS"/>
</dbReference>
<dbReference type="InterPro" id="IPR016239">
    <property type="entry name" value="Ribosomal_S6_kinase_II"/>
</dbReference>
<dbReference type="InterPro" id="IPR008271">
    <property type="entry name" value="Ser/Thr_kinase_AS"/>
</dbReference>
<dbReference type="PANTHER" id="PTHR24351">
    <property type="entry name" value="RIBOSOMAL PROTEIN S6 KINASE"/>
    <property type="match status" value="1"/>
</dbReference>
<dbReference type="Pfam" id="PF00069">
    <property type="entry name" value="Pkinase"/>
    <property type="match status" value="2"/>
</dbReference>
<dbReference type="Pfam" id="PF00433">
    <property type="entry name" value="Pkinase_C"/>
    <property type="match status" value="1"/>
</dbReference>
<dbReference type="PIRSF" id="PIRSF000606">
    <property type="entry name" value="Ribsml_S6_kin_2"/>
    <property type="match status" value="1"/>
</dbReference>
<dbReference type="SMART" id="SM00133">
    <property type="entry name" value="S_TK_X"/>
    <property type="match status" value="1"/>
</dbReference>
<dbReference type="SMART" id="SM00220">
    <property type="entry name" value="S_TKc"/>
    <property type="match status" value="2"/>
</dbReference>
<dbReference type="SUPFAM" id="SSF56112">
    <property type="entry name" value="Protein kinase-like (PK-like)"/>
    <property type="match status" value="2"/>
</dbReference>
<dbReference type="PROSITE" id="PS51285">
    <property type="entry name" value="AGC_KINASE_CTER"/>
    <property type="match status" value="1"/>
</dbReference>
<dbReference type="PROSITE" id="PS00107">
    <property type="entry name" value="PROTEIN_KINASE_ATP"/>
    <property type="match status" value="2"/>
</dbReference>
<dbReference type="PROSITE" id="PS50011">
    <property type="entry name" value="PROTEIN_KINASE_DOM"/>
    <property type="match status" value="2"/>
</dbReference>
<dbReference type="PROSITE" id="PS00108">
    <property type="entry name" value="PROTEIN_KINASE_ST"/>
    <property type="match status" value="2"/>
</dbReference>
<proteinExistence type="evidence at transcript level"/>
<evidence type="ECO:0000250" key="1"/>
<evidence type="ECO:0000255" key="2">
    <source>
        <dbReference type="PROSITE-ProRule" id="PRU00159"/>
    </source>
</evidence>
<evidence type="ECO:0000255" key="3">
    <source>
        <dbReference type="PROSITE-ProRule" id="PRU00618"/>
    </source>
</evidence>
<evidence type="ECO:0000256" key="4">
    <source>
        <dbReference type="SAM" id="MobiDB-lite"/>
    </source>
</evidence>
<evidence type="ECO:0000305" key="5"/>
<comment type="function">
    <text evidence="1">Serine/threonine-protein kinase that is required for the mitogen or stress-induced phosphorylation of the transcription factors CREB1 and ATF1 and that contributes to gene activation by histone phosphorylation. Phosphorylates CREB1 and ATF1 in response to mitogenic or stress stimuli such as UV-C irradiation, epidermal growth factor (EGF) and anisomycin. Directly represses transcription via phosphorylation of 'Ser-1' of histone H2A. Phosphorylates 'Ser-10' of histone H3 in response to mitogenics, stress stimuli and EGF, which results in the transcriptional activation of several immediate early genes, including proto-oncogenes c-fos/FOS and c-jun/JUN. May also phosphorylate 'Ser-28' of histone H3. Mediates the mitogen- and stress-induced phosphorylation of high mobility group protein 1 (HMGN1/HMG14) (By similarity).</text>
</comment>
<comment type="catalytic activity">
    <reaction>
        <text>L-seryl-[protein] + ATP = O-phospho-L-seryl-[protein] + ADP + H(+)</text>
        <dbReference type="Rhea" id="RHEA:17989"/>
        <dbReference type="Rhea" id="RHEA-COMP:9863"/>
        <dbReference type="Rhea" id="RHEA-COMP:11604"/>
        <dbReference type="ChEBI" id="CHEBI:15378"/>
        <dbReference type="ChEBI" id="CHEBI:29999"/>
        <dbReference type="ChEBI" id="CHEBI:30616"/>
        <dbReference type="ChEBI" id="CHEBI:83421"/>
        <dbReference type="ChEBI" id="CHEBI:456216"/>
        <dbReference type="EC" id="2.7.11.1"/>
    </reaction>
</comment>
<comment type="catalytic activity">
    <reaction>
        <text>L-threonyl-[protein] + ATP = O-phospho-L-threonyl-[protein] + ADP + H(+)</text>
        <dbReference type="Rhea" id="RHEA:46608"/>
        <dbReference type="Rhea" id="RHEA-COMP:11060"/>
        <dbReference type="Rhea" id="RHEA-COMP:11605"/>
        <dbReference type="ChEBI" id="CHEBI:15378"/>
        <dbReference type="ChEBI" id="CHEBI:30013"/>
        <dbReference type="ChEBI" id="CHEBI:30616"/>
        <dbReference type="ChEBI" id="CHEBI:61977"/>
        <dbReference type="ChEBI" id="CHEBI:456216"/>
        <dbReference type="EC" id="2.7.11.1"/>
    </reaction>
</comment>
<comment type="cofactor">
    <cofactor evidence="1">
        <name>Mg(2+)</name>
        <dbReference type="ChEBI" id="CHEBI:18420"/>
    </cofactor>
</comment>
<comment type="activity regulation">
    <text evidence="1">Activated by phosphorylation at Ser-350, Thr-571 and Thr-690 by MAP kinases, and by further autophosphorylation of Ser-202, Ser-366 and Ser-371 by the activated C-terminal kinase domain. The active N-terminal kinase domain finally phosphorylates downstream substrates, as well as Ser-740, Ser-742 and Ser-748 in its own C-terminal region (By similarity).</text>
</comment>
<comment type="subcellular location">
    <subcellularLocation>
        <location evidence="1">Nucleus</location>
    </subcellularLocation>
</comment>
<comment type="tissue specificity">
    <text>Widely expressed with high levels in heart, brain and placenta. Less abundant in lung, kidney and liver.</text>
</comment>
<comment type="domain">
    <text evidence="1">Enzyme activity requires the presence of both kinase domains.</text>
</comment>
<comment type="PTM">
    <text>Ser-366 and Thr-571 phosphorylation is required for kinase activity. Ser-366 and Ser-202 are autophosphorylated by the C-terminal kinase domain, and their phosphorylation is essential for the catalytic activity of the N-terminal kinase domain. Phosphorylated at Ser-350, Thr-571 and Thr-690 by MAP kinases. Autophosphorylated at Ser-740, Ser-742 and Ser-748 by the N-terminal kinase domain.</text>
</comment>
<comment type="miscellaneous">
    <text evidence="1">Enzyme activity requires the presence of both kinase domains.</text>
</comment>
<comment type="similarity">
    <text evidence="5">Belongs to the protein kinase superfamily. AGC Ser/Thr protein kinase family. S6 kinase subfamily.</text>
</comment>
<gene>
    <name type="primary">RPS6KA5</name>
    <name type="ORF">RCJMB04_14g1</name>
</gene>